<sequence>MANLDLSKYGITGVTEILHNPSYDVLFAEETKPGLEGFEKGQVTELGAVNVMTGVYTGRSPKDKFFVKNEASENSVWWTSEEYKNDNKPCSEEAWADLKAKAVKELSNKRLFVVDTFCGANEGTRMKVRFIMEVAWQAHFVTNMFIRPTAEELANYGEPDFVCFNASKAKVDNYKELGLNSETATVFNLKTKEQVILNTWYGGEMKKGMFSIMNYMNPLRGIASMHCSANTDMEGTSSAIFFGLSGTGKTTLSTDPKRKLIGDDEHGWDNEGVFNYEGGCYAKVINLDKESEPDIFNAIKRDALLENVTVAADGKINFADKSVTENTRVSYPIYHIENIVKPVSKGPHAKQVIFLSADAFGVLPPVSILNPEQAQYYFLSGFTAKLAGTERGITEPTPTFSACFGAAFLSLHPTKYAEELVKKMEMTGAKAYLVNTGWNGSGKRISIKDTRGIIDAILDGSIDKAPTKVIPFFDFVVPTELPGVDPKILDPRDTYADPAQWNEKAKDLAGRFIKNFAKFTGNEAGKKLVAAGPKL</sequence>
<reference key="1">
    <citation type="journal article" date="2005" name="Science">
        <title>Extensive DNA inversions in the B. fragilis genome control variable gene expression.</title>
        <authorList>
            <person name="Cerdeno-Tarraga A.-M."/>
            <person name="Patrick S."/>
            <person name="Crossman L.C."/>
            <person name="Blakely G."/>
            <person name="Abratt V."/>
            <person name="Lennard N."/>
            <person name="Poxton I."/>
            <person name="Duerden B."/>
            <person name="Harris B."/>
            <person name="Quail M.A."/>
            <person name="Barron A."/>
            <person name="Clark L."/>
            <person name="Corton C."/>
            <person name="Doggett J."/>
            <person name="Holden M.T.G."/>
            <person name="Larke N."/>
            <person name="Line A."/>
            <person name="Lord A."/>
            <person name="Norbertczak H."/>
            <person name="Ormond D."/>
            <person name="Price C."/>
            <person name="Rabbinowitsch E."/>
            <person name="Woodward J."/>
            <person name="Barrell B.G."/>
            <person name="Parkhill J."/>
        </authorList>
    </citation>
    <scope>NUCLEOTIDE SEQUENCE [LARGE SCALE GENOMIC DNA]</scope>
    <source>
        <strain>ATCC 25285 / DSM 2151 / CCUG 4856 / JCM 11019 / LMG 10263 / NCTC 9343 / Onslow / VPI 2553 / EN-2</strain>
    </source>
</reference>
<name>PCKA_BACFN</name>
<protein>
    <recommendedName>
        <fullName evidence="1">Phosphoenolpyruvate carboxykinase (ATP)</fullName>
        <shortName evidence="1">PCK</shortName>
        <shortName evidence="1">PEP carboxykinase</shortName>
        <shortName evidence="1">PEPCK</shortName>
        <ecNumber evidence="1">4.1.1.49</ecNumber>
    </recommendedName>
</protein>
<organism>
    <name type="scientific">Bacteroides fragilis (strain ATCC 25285 / DSM 2151 / CCUG 4856 / JCM 11019 / LMG 10263 / NCTC 9343 / Onslow / VPI 2553 / EN-2)</name>
    <dbReference type="NCBI Taxonomy" id="272559"/>
    <lineage>
        <taxon>Bacteria</taxon>
        <taxon>Pseudomonadati</taxon>
        <taxon>Bacteroidota</taxon>
        <taxon>Bacteroidia</taxon>
        <taxon>Bacteroidales</taxon>
        <taxon>Bacteroidaceae</taxon>
        <taxon>Bacteroides</taxon>
    </lineage>
</organism>
<proteinExistence type="inferred from homology"/>
<evidence type="ECO:0000255" key="1">
    <source>
        <dbReference type="HAMAP-Rule" id="MF_00453"/>
    </source>
</evidence>
<accession>Q5L7N5</accession>
<gene>
    <name evidence="1" type="primary">pckA</name>
    <name type="ordered locus">BF4244</name>
</gene>
<feature type="chain" id="PRO_0000236920" description="Phosphoenolpyruvate carboxykinase (ATP)">
    <location>
        <begin position="1"/>
        <end position="535"/>
    </location>
</feature>
<feature type="binding site" evidence="1">
    <location>
        <position position="59"/>
    </location>
    <ligand>
        <name>substrate</name>
    </ligand>
</feature>
<feature type="binding site" evidence="1">
    <location>
        <position position="201"/>
    </location>
    <ligand>
        <name>substrate</name>
    </ligand>
</feature>
<feature type="binding site" evidence="1">
    <location>
        <position position="207"/>
    </location>
    <ligand>
        <name>ATP</name>
        <dbReference type="ChEBI" id="CHEBI:30616"/>
    </ligand>
</feature>
<feature type="binding site" evidence="1">
    <location>
        <position position="207"/>
    </location>
    <ligand>
        <name>Mn(2+)</name>
        <dbReference type="ChEBI" id="CHEBI:29035"/>
    </ligand>
</feature>
<feature type="binding site" evidence="1">
    <location>
        <position position="207"/>
    </location>
    <ligand>
        <name>substrate</name>
    </ligand>
</feature>
<feature type="binding site" evidence="1">
    <location>
        <position position="226"/>
    </location>
    <ligand>
        <name>ATP</name>
        <dbReference type="ChEBI" id="CHEBI:30616"/>
    </ligand>
</feature>
<feature type="binding site" evidence="1">
    <location>
        <position position="226"/>
    </location>
    <ligand>
        <name>Mn(2+)</name>
        <dbReference type="ChEBI" id="CHEBI:29035"/>
    </ligand>
</feature>
<feature type="binding site" evidence="1">
    <location>
        <begin position="243"/>
        <end position="251"/>
    </location>
    <ligand>
        <name>ATP</name>
        <dbReference type="ChEBI" id="CHEBI:30616"/>
    </ligand>
</feature>
<feature type="binding site" evidence="1">
    <location>
        <position position="264"/>
    </location>
    <ligand>
        <name>Mn(2+)</name>
        <dbReference type="ChEBI" id="CHEBI:29035"/>
    </ligand>
</feature>
<feature type="binding site" evidence="1">
    <location>
        <position position="292"/>
    </location>
    <ligand>
        <name>ATP</name>
        <dbReference type="ChEBI" id="CHEBI:30616"/>
    </ligand>
</feature>
<feature type="binding site" evidence="1">
    <location>
        <position position="328"/>
    </location>
    <ligand>
        <name>ATP</name>
        <dbReference type="ChEBI" id="CHEBI:30616"/>
    </ligand>
</feature>
<feature type="binding site" evidence="1">
    <location>
        <position position="328"/>
    </location>
    <ligand>
        <name>substrate</name>
    </ligand>
</feature>
<feature type="binding site" evidence="1">
    <location>
        <begin position="444"/>
        <end position="445"/>
    </location>
    <ligand>
        <name>ATP</name>
        <dbReference type="ChEBI" id="CHEBI:30616"/>
    </ligand>
</feature>
<feature type="binding site" evidence="1">
    <location>
        <position position="450"/>
    </location>
    <ligand>
        <name>ATP</name>
        <dbReference type="ChEBI" id="CHEBI:30616"/>
    </ligand>
</feature>
<keyword id="KW-0067">ATP-binding</keyword>
<keyword id="KW-0963">Cytoplasm</keyword>
<keyword id="KW-0210">Decarboxylase</keyword>
<keyword id="KW-0312">Gluconeogenesis</keyword>
<keyword id="KW-0456">Lyase</keyword>
<keyword id="KW-0464">Manganese</keyword>
<keyword id="KW-0479">Metal-binding</keyword>
<keyword id="KW-0547">Nucleotide-binding</keyword>
<comment type="function">
    <text evidence="1">Involved in the gluconeogenesis. Catalyzes the conversion of oxaloacetate (OAA) to phosphoenolpyruvate (PEP) through direct phosphoryl transfer between the nucleoside triphosphate and OAA.</text>
</comment>
<comment type="catalytic activity">
    <reaction evidence="1">
        <text>oxaloacetate + ATP = phosphoenolpyruvate + ADP + CO2</text>
        <dbReference type="Rhea" id="RHEA:18617"/>
        <dbReference type="ChEBI" id="CHEBI:16452"/>
        <dbReference type="ChEBI" id="CHEBI:16526"/>
        <dbReference type="ChEBI" id="CHEBI:30616"/>
        <dbReference type="ChEBI" id="CHEBI:58702"/>
        <dbReference type="ChEBI" id="CHEBI:456216"/>
        <dbReference type="EC" id="4.1.1.49"/>
    </reaction>
</comment>
<comment type="cofactor">
    <cofactor evidence="1">
        <name>Mn(2+)</name>
        <dbReference type="ChEBI" id="CHEBI:29035"/>
    </cofactor>
    <text evidence="1">Binds 1 Mn(2+) ion per subunit.</text>
</comment>
<comment type="pathway">
    <text evidence="1">Carbohydrate biosynthesis; gluconeogenesis.</text>
</comment>
<comment type="subcellular location">
    <subcellularLocation>
        <location evidence="1">Cytoplasm</location>
    </subcellularLocation>
</comment>
<comment type="similarity">
    <text evidence="1">Belongs to the phosphoenolpyruvate carboxykinase (ATP) family.</text>
</comment>
<dbReference type="EC" id="4.1.1.49" evidence="1"/>
<dbReference type="EMBL" id="CR626927">
    <property type="protein sequence ID" value="CAH09915.1"/>
    <property type="molecule type" value="Genomic_DNA"/>
</dbReference>
<dbReference type="RefSeq" id="WP_005791971.1">
    <property type="nucleotide sequence ID" value="NZ_UFTH01000001.1"/>
</dbReference>
<dbReference type="SMR" id="Q5L7N5"/>
<dbReference type="PaxDb" id="272559-BF9343_4134"/>
<dbReference type="GeneID" id="60367668"/>
<dbReference type="KEGG" id="bfs:BF9343_4134"/>
<dbReference type="eggNOG" id="COG1866">
    <property type="taxonomic scope" value="Bacteria"/>
</dbReference>
<dbReference type="HOGENOM" id="CLU_018247_0_1_10"/>
<dbReference type="UniPathway" id="UPA00138"/>
<dbReference type="Proteomes" id="UP000006731">
    <property type="component" value="Chromosome"/>
</dbReference>
<dbReference type="GO" id="GO:0005829">
    <property type="term" value="C:cytosol"/>
    <property type="evidence" value="ECO:0007669"/>
    <property type="project" value="TreeGrafter"/>
</dbReference>
<dbReference type="GO" id="GO:0005524">
    <property type="term" value="F:ATP binding"/>
    <property type="evidence" value="ECO:0007669"/>
    <property type="project" value="UniProtKB-UniRule"/>
</dbReference>
<dbReference type="GO" id="GO:0046872">
    <property type="term" value="F:metal ion binding"/>
    <property type="evidence" value="ECO:0007669"/>
    <property type="project" value="UniProtKB-KW"/>
</dbReference>
<dbReference type="GO" id="GO:0004612">
    <property type="term" value="F:phosphoenolpyruvate carboxykinase (ATP) activity"/>
    <property type="evidence" value="ECO:0007669"/>
    <property type="project" value="UniProtKB-UniRule"/>
</dbReference>
<dbReference type="GO" id="GO:0006094">
    <property type="term" value="P:gluconeogenesis"/>
    <property type="evidence" value="ECO:0007669"/>
    <property type="project" value="UniProtKB-UniRule"/>
</dbReference>
<dbReference type="CDD" id="cd00484">
    <property type="entry name" value="PEPCK_ATP"/>
    <property type="match status" value="1"/>
</dbReference>
<dbReference type="FunFam" id="2.170.8.10:FF:000001">
    <property type="entry name" value="Phosphoenolpyruvate carboxykinase (ATP)"/>
    <property type="match status" value="1"/>
</dbReference>
<dbReference type="FunFam" id="3.40.449.10:FF:000001">
    <property type="entry name" value="Phosphoenolpyruvate carboxykinase (ATP)"/>
    <property type="match status" value="1"/>
</dbReference>
<dbReference type="Gene3D" id="3.90.228.20">
    <property type="match status" value="1"/>
</dbReference>
<dbReference type="Gene3D" id="3.40.449.10">
    <property type="entry name" value="Phosphoenolpyruvate Carboxykinase, domain 1"/>
    <property type="match status" value="1"/>
</dbReference>
<dbReference type="Gene3D" id="2.170.8.10">
    <property type="entry name" value="Phosphoenolpyruvate Carboxykinase, domain 2"/>
    <property type="match status" value="1"/>
</dbReference>
<dbReference type="HAMAP" id="MF_00453">
    <property type="entry name" value="PEPCK_ATP"/>
    <property type="match status" value="1"/>
</dbReference>
<dbReference type="InterPro" id="IPR001272">
    <property type="entry name" value="PEP_carboxykinase_ATP"/>
</dbReference>
<dbReference type="InterPro" id="IPR013035">
    <property type="entry name" value="PEP_carboxykinase_C"/>
</dbReference>
<dbReference type="InterPro" id="IPR008210">
    <property type="entry name" value="PEP_carboxykinase_N"/>
</dbReference>
<dbReference type="InterPro" id="IPR015994">
    <property type="entry name" value="PEPCK_ATP_CS"/>
</dbReference>
<dbReference type="NCBIfam" id="TIGR00224">
    <property type="entry name" value="pckA"/>
    <property type="match status" value="1"/>
</dbReference>
<dbReference type="NCBIfam" id="NF006819">
    <property type="entry name" value="PRK09344.1-1"/>
    <property type="match status" value="1"/>
</dbReference>
<dbReference type="NCBIfam" id="NF006820">
    <property type="entry name" value="PRK09344.1-2"/>
    <property type="match status" value="1"/>
</dbReference>
<dbReference type="NCBIfam" id="NF006821">
    <property type="entry name" value="PRK09344.1-3"/>
    <property type="match status" value="1"/>
</dbReference>
<dbReference type="PANTHER" id="PTHR30031:SF0">
    <property type="entry name" value="PHOSPHOENOLPYRUVATE CARBOXYKINASE (ATP)"/>
    <property type="match status" value="1"/>
</dbReference>
<dbReference type="PANTHER" id="PTHR30031">
    <property type="entry name" value="PHOSPHOENOLPYRUVATE CARBOXYKINASE ATP"/>
    <property type="match status" value="1"/>
</dbReference>
<dbReference type="Pfam" id="PF01293">
    <property type="entry name" value="PEPCK_ATP"/>
    <property type="match status" value="1"/>
</dbReference>
<dbReference type="PIRSF" id="PIRSF006294">
    <property type="entry name" value="PEP_crbxkin"/>
    <property type="match status" value="1"/>
</dbReference>
<dbReference type="SUPFAM" id="SSF68923">
    <property type="entry name" value="PEP carboxykinase N-terminal domain"/>
    <property type="match status" value="1"/>
</dbReference>
<dbReference type="SUPFAM" id="SSF53795">
    <property type="entry name" value="PEP carboxykinase-like"/>
    <property type="match status" value="1"/>
</dbReference>
<dbReference type="PROSITE" id="PS00532">
    <property type="entry name" value="PEPCK_ATP"/>
    <property type="match status" value="1"/>
</dbReference>